<keyword id="KW-1185">Reference proteome</keyword>
<keyword id="KW-0694">RNA-binding</keyword>
<keyword id="KW-0804">Transcription</keyword>
<keyword id="KW-0889">Transcription antitermination</keyword>
<keyword id="KW-0805">Transcription regulation</keyword>
<sequence length="145" mass="16675">MGRRASREIAMKLIYQLEIQKDSREEQINNTLEQYDLNENDREYILDVVKGVFKNQEEIDGTIEKFSKGWKLSRISKVDLAILRLAIYEMCHRDDIPFTVAINEAVELAKNYSGEESGSFINGILGKVVKVKLMSADGNENRDEE</sequence>
<dbReference type="EMBL" id="CP000568">
    <property type="protein sequence ID" value="ABN52069.1"/>
    <property type="molecule type" value="Genomic_DNA"/>
</dbReference>
<dbReference type="RefSeq" id="WP_003518757.1">
    <property type="nucleotide sequence ID" value="NC_009012.1"/>
</dbReference>
<dbReference type="SMR" id="A3DDP0"/>
<dbReference type="STRING" id="203119.Cthe_0834"/>
<dbReference type="GeneID" id="35804383"/>
<dbReference type="KEGG" id="cth:Cthe_0834"/>
<dbReference type="eggNOG" id="COG0781">
    <property type="taxonomic scope" value="Bacteria"/>
</dbReference>
<dbReference type="HOGENOM" id="CLU_087843_3_1_9"/>
<dbReference type="OrthoDB" id="9811381at2"/>
<dbReference type="Proteomes" id="UP000002145">
    <property type="component" value="Chromosome"/>
</dbReference>
<dbReference type="GO" id="GO:0005829">
    <property type="term" value="C:cytosol"/>
    <property type="evidence" value="ECO:0007669"/>
    <property type="project" value="TreeGrafter"/>
</dbReference>
<dbReference type="GO" id="GO:0003723">
    <property type="term" value="F:RNA binding"/>
    <property type="evidence" value="ECO:0007669"/>
    <property type="project" value="UniProtKB-UniRule"/>
</dbReference>
<dbReference type="GO" id="GO:0006353">
    <property type="term" value="P:DNA-templated transcription termination"/>
    <property type="evidence" value="ECO:0007669"/>
    <property type="project" value="UniProtKB-UniRule"/>
</dbReference>
<dbReference type="GO" id="GO:0031564">
    <property type="term" value="P:transcription antitermination"/>
    <property type="evidence" value="ECO:0007669"/>
    <property type="project" value="UniProtKB-KW"/>
</dbReference>
<dbReference type="CDD" id="cd00619">
    <property type="entry name" value="Terminator_NusB"/>
    <property type="match status" value="1"/>
</dbReference>
<dbReference type="Gene3D" id="1.10.940.10">
    <property type="entry name" value="NusB-like"/>
    <property type="match status" value="1"/>
</dbReference>
<dbReference type="HAMAP" id="MF_00073">
    <property type="entry name" value="NusB"/>
    <property type="match status" value="1"/>
</dbReference>
<dbReference type="InterPro" id="IPR035926">
    <property type="entry name" value="NusB-like_sf"/>
</dbReference>
<dbReference type="InterPro" id="IPR011605">
    <property type="entry name" value="NusB_fam"/>
</dbReference>
<dbReference type="InterPro" id="IPR006027">
    <property type="entry name" value="NusB_RsmB_TIM44"/>
</dbReference>
<dbReference type="NCBIfam" id="TIGR01951">
    <property type="entry name" value="nusB"/>
    <property type="match status" value="1"/>
</dbReference>
<dbReference type="PANTHER" id="PTHR11078:SF3">
    <property type="entry name" value="ANTITERMINATION NUSB DOMAIN-CONTAINING PROTEIN"/>
    <property type="match status" value="1"/>
</dbReference>
<dbReference type="PANTHER" id="PTHR11078">
    <property type="entry name" value="N UTILIZATION SUBSTANCE PROTEIN B-RELATED"/>
    <property type="match status" value="1"/>
</dbReference>
<dbReference type="Pfam" id="PF01029">
    <property type="entry name" value="NusB"/>
    <property type="match status" value="1"/>
</dbReference>
<dbReference type="SUPFAM" id="SSF48013">
    <property type="entry name" value="NusB-like"/>
    <property type="match status" value="1"/>
</dbReference>
<feature type="chain" id="PRO_1000023732" description="Transcription antitermination protein NusB">
    <location>
        <begin position="1"/>
        <end position="145"/>
    </location>
</feature>
<comment type="function">
    <text evidence="1">Involved in transcription antitermination. Required for transcription of ribosomal RNA (rRNA) genes. Binds specifically to the boxA antiterminator sequence of the ribosomal RNA (rrn) operons.</text>
</comment>
<comment type="similarity">
    <text evidence="1">Belongs to the NusB family.</text>
</comment>
<organism>
    <name type="scientific">Acetivibrio thermocellus (strain ATCC 27405 / DSM 1237 / JCM 9322 / NBRC 103400 / NCIMB 10682 / NRRL B-4536 / VPI 7372)</name>
    <name type="common">Clostridium thermocellum</name>
    <dbReference type="NCBI Taxonomy" id="203119"/>
    <lineage>
        <taxon>Bacteria</taxon>
        <taxon>Bacillati</taxon>
        <taxon>Bacillota</taxon>
        <taxon>Clostridia</taxon>
        <taxon>Eubacteriales</taxon>
        <taxon>Oscillospiraceae</taxon>
        <taxon>Acetivibrio</taxon>
    </lineage>
</organism>
<reference key="1">
    <citation type="submission" date="2007-02" db="EMBL/GenBank/DDBJ databases">
        <title>Complete sequence of Clostridium thermocellum ATCC 27405.</title>
        <authorList>
            <consortium name="US DOE Joint Genome Institute"/>
            <person name="Copeland A."/>
            <person name="Lucas S."/>
            <person name="Lapidus A."/>
            <person name="Barry K."/>
            <person name="Detter J.C."/>
            <person name="Glavina del Rio T."/>
            <person name="Hammon N."/>
            <person name="Israni S."/>
            <person name="Dalin E."/>
            <person name="Tice H."/>
            <person name="Pitluck S."/>
            <person name="Chertkov O."/>
            <person name="Brettin T."/>
            <person name="Bruce D."/>
            <person name="Han C."/>
            <person name="Tapia R."/>
            <person name="Gilna P."/>
            <person name="Schmutz J."/>
            <person name="Larimer F."/>
            <person name="Land M."/>
            <person name="Hauser L."/>
            <person name="Kyrpides N."/>
            <person name="Mikhailova N."/>
            <person name="Wu J.H.D."/>
            <person name="Newcomb M."/>
            <person name="Richardson P."/>
        </authorList>
    </citation>
    <scope>NUCLEOTIDE SEQUENCE [LARGE SCALE GENOMIC DNA]</scope>
    <source>
        <strain>ATCC 27405 / DSM 1237 / JCM 9322 / NBRC 103400 / NCIMB 10682 / NRRL B-4536 / VPI 7372</strain>
    </source>
</reference>
<protein>
    <recommendedName>
        <fullName evidence="1">Transcription antitermination protein NusB</fullName>
    </recommendedName>
    <alternativeName>
        <fullName evidence="1">Antitermination factor NusB</fullName>
    </alternativeName>
</protein>
<evidence type="ECO:0000255" key="1">
    <source>
        <dbReference type="HAMAP-Rule" id="MF_00073"/>
    </source>
</evidence>
<proteinExistence type="inferred from homology"/>
<name>NUSB_ACET2</name>
<gene>
    <name evidence="1" type="primary">nusB</name>
    <name type="ordered locus">Cthe_0834</name>
</gene>
<accession>A3DDP0</accession>